<feature type="chain" id="PRO_0000125696" description="Large ribosomal subunit protein uL1">
    <location>
        <begin position="1"/>
        <end position="235"/>
    </location>
</feature>
<comment type="function">
    <text evidence="1">Binds directly to 23S rRNA. The L1 stalk is quite mobile in the ribosome, and is involved in E site tRNA release.</text>
</comment>
<comment type="function">
    <text evidence="1">Protein L1 is also a translational repressor protein, it controls the translation of the L11 operon by binding to its mRNA.</text>
</comment>
<comment type="subunit">
    <text evidence="1">Part of the 50S ribosomal subunit.</text>
</comment>
<comment type="similarity">
    <text evidence="1">Belongs to the universal ribosomal protein uL1 family.</text>
</comment>
<evidence type="ECO:0000255" key="1">
    <source>
        <dbReference type="HAMAP-Rule" id="MF_01318"/>
    </source>
</evidence>
<evidence type="ECO:0000305" key="2"/>
<gene>
    <name evidence="1" type="primary">rplA</name>
    <name type="ordered locus">BQ2027_MB0660</name>
</gene>
<name>RL1_MYCBO</name>
<keyword id="KW-1185">Reference proteome</keyword>
<keyword id="KW-0678">Repressor</keyword>
<keyword id="KW-0687">Ribonucleoprotein</keyword>
<keyword id="KW-0689">Ribosomal protein</keyword>
<keyword id="KW-0694">RNA-binding</keyword>
<keyword id="KW-0699">rRNA-binding</keyword>
<keyword id="KW-0810">Translation regulation</keyword>
<keyword id="KW-0820">tRNA-binding</keyword>
<reference key="1">
    <citation type="journal article" date="2003" name="Proc. Natl. Acad. Sci. U.S.A.">
        <title>The complete genome sequence of Mycobacterium bovis.</title>
        <authorList>
            <person name="Garnier T."/>
            <person name="Eiglmeier K."/>
            <person name="Camus J.-C."/>
            <person name="Medina N."/>
            <person name="Mansoor H."/>
            <person name="Pryor M."/>
            <person name="Duthoy S."/>
            <person name="Grondin S."/>
            <person name="Lacroix C."/>
            <person name="Monsempe C."/>
            <person name="Simon S."/>
            <person name="Harris B."/>
            <person name="Atkin R."/>
            <person name="Doggett J."/>
            <person name="Mayes R."/>
            <person name="Keating L."/>
            <person name="Wheeler P.R."/>
            <person name="Parkhill J."/>
            <person name="Barrell B.G."/>
            <person name="Cole S.T."/>
            <person name="Gordon S.V."/>
            <person name="Hewinson R.G."/>
        </authorList>
    </citation>
    <scope>NUCLEOTIDE SEQUENCE [LARGE SCALE GENOMIC DNA]</scope>
    <source>
        <strain>ATCC BAA-935 / AF2122/97</strain>
    </source>
</reference>
<reference key="2">
    <citation type="journal article" date="2017" name="Genome Announc.">
        <title>Updated reference genome sequence and annotation of Mycobacterium bovis AF2122/97.</title>
        <authorList>
            <person name="Malone K.M."/>
            <person name="Farrell D."/>
            <person name="Stuber T.P."/>
            <person name="Schubert O.T."/>
            <person name="Aebersold R."/>
            <person name="Robbe-Austerman S."/>
            <person name="Gordon S.V."/>
        </authorList>
    </citation>
    <scope>NUCLEOTIDE SEQUENCE [LARGE SCALE GENOMIC DNA]</scope>
    <scope>GENOME REANNOTATION</scope>
    <source>
        <strain>ATCC BAA-935 / AF2122/97</strain>
    </source>
</reference>
<dbReference type="EMBL" id="LT708304">
    <property type="protein sequence ID" value="SIT99258.1"/>
    <property type="molecule type" value="Genomic_DNA"/>
</dbReference>
<dbReference type="RefSeq" id="NP_854318.1">
    <property type="nucleotide sequence ID" value="NC_002945.3"/>
</dbReference>
<dbReference type="RefSeq" id="WP_010950427.1">
    <property type="nucleotide sequence ID" value="NC_002945.4"/>
</dbReference>
<dbReference type="SMR" id="P59790"/>
<dbReference type="KEGG" id="mbo:BQ2027_MB0660"/>
<dbReference type="PATRIC" id="fig|233413.5.peg.720"/>
<dbReference type="Proteomes" id="UP000001419">
    <property type="component" value="Chromosome"/>
</dbReference>
<dbReference type="GO" id="GO:0015934">
    <property type="term" value="C:large ribosomal subunit"/>
    <property type="evidence" value="ECO:0007669"/>
    <property type="project" value="InterPro"/>
</dbReference>
<dbReference type="GO" id="GO:0019843">
    <property type="term" value="F:rRNA binding"/>
    <property type="evidence" value="ECO:0007669"/>
    <property type="project" value="UniProtKB-UniRule"/>
</dbReference>
<dbReference type="GO" id="GO:0003735">
    <property type="term" value="F:structural constituent of ribosome"/>
    <property type="evidence" value="ECO:0007669"/>
    <property type="project" value="InterPro"/>
</dbReference>
<dbReference type="GO" id="GO:0000049">
    <property type="term" value="F:tRNA binding"/>
    <property type="evidence" value="ECO:0007669"/>
    <property type="project" value="UniProtKB-KW"/>
</dbReference>
<dbReference type="GO" id="GO:0006417">
    <property type="term" value="P:regulation of translation"/>
    <property type="evidence" value="ECO:0007669"/>
    <property type="project" value="UniProtKB-KW"/>
</dbReference>
<dbReference type="GO" id="GO:0006412">
    <property type="term" value="P:translation"/>
    <property type="evidence" value="ECO:0007669"/>
    <property type="project" value="UniProtKB-UniRule"/>
</dbReference>
<dbReference type="CDD" id="cd00403">
    <property type="entry name" value="Ribosomal_L1"/>
    <property type="match status" value="1"/>
</dbReference>
<dbReference type="FunFam" id="3.40.50.790:FF:000001">
    <property type="entry name" value="50S ribosomal protein L1"/>
    <property type="match status" value="1"/>
</dbReference>
<dbReference type="Gene3D" id="3.30.190.20">
    <property type="match status" value="1"/>
</dbReference>
<dbReference type="Gene3D" id="3.40.50.790">
    <property type="match status" value="1"/>
</dbReference>
<dbReference type="HAMAP" id="MF_01318_B">
    <property type="entry name" value="Ribosomal_uL1_B"/>
    <property type="match status" value="1"/>
</dbReference>
<dbReference type="InterPro" id="IPR005878">
    <property type="entry name" value="Ribosom_uL1_bac-type"/>
</dbReference>
<dbReference type="InterPro" id="IPR002143">
    <property type="entry name" value="Ribosomal_uL1"/>
</dbReference>
<dbReference type="InterPro" id="IPR023674">
    <property type="entry name" value="Ribosomal_uL1-like"/>
</dbReference>
<dbReference type="InterPro" id="IPR028364">
    <property type="entry name" value="Ribosomal_uL1/biogenesis"/>
</dbReference>
<dbReference type="InterPro" id="IPR016095">
    <property type="entry name" value="Ribosomal_uL1_3-a/b-sand"/>
</dbReference>
<dbReference type="InterPro" id="IPR023673">
    <property type="entry name" value="Ribosomal_uL1_CS"/>
</dbReference>
<dbReference type="NCBIfam" id="TIGR01169">
    <property type="entry name" value="rplA_bact"/>
    <property type="match status" value="1"/>
</dbReference>
<dbReference type="PANTHER" id="PTHR36427">
    <property type="entry name" value="54S RIBOSOMAL PROTEIN L1, MITOCHONDRIAL"/>
    <property type="match status" value="1"/>
</dbReference>
<dbReference type="PANTHER" id="PTHR36427:SF3">
    <property type="entry name" value="LARGE RIBOSOMAL SUBUNIT PROTEIN UL1M"/>
    <property type="match status" value="1"/>
</dbReference>
<dbReference type="Pfam" id="PF00687">
    <property type="entry name" value="Ribosomal_L1"/>
    <property type="match status" value="1"/>
</dbReference>
<dbReference type="PIRSF" id="PIRSF002155">
    <property type="entry name" value="Ribosomal_L1"/>
    <property type="match status" value="1"/>
</dbReference>
<dbReference type="SUPFAM" id="SSF56808">
    <property type="entry name" value="Ribosomal protein L1"/>
    <property type="match status" value="1"/>
</dbReference>
<dbReference type="PROSITE" id="PS01199">
    <property type="entry name" value="RIBOSOMAL_L1"/>
    <property type="match status" value="1"/>
</dbReference>
<protein>
    <recommendedName>
        <fullName evidence="1">Large ribosomal subunit protein uL1</fullName>
    </recommendedName>
    <alternativeName>
        <fullName evidence="2">50S ribosomal protein L1</fullName>
    </alternativeName>
</protein>
<organism>
    <name type="scientific">Mycobacterium bovis (strain ATCC BAA-935 / AF2122/97)</name>
    <dbReference type="NCBI Taxonomy" id="233413"/>
    <lineage>
        <taxon>Bacteria</taxon>
        <taxon>Bacillati</taxon>
        <taxon>Actinomycetota</taxon>
        <taxon>Actinomycetes</taxon>
        <taxon>Mycobacteriales</taxon>
        <taxon>Mycobacteriaceae</taxon>
        <taxon>Mycobacterium</taxon>
        <taxon>Mycobacterium tuberculosis complex</taxon>
    </lineage>
</organism>
<sequence length="235" mass="24726">MSKTSKAYRAAAAKVDRTNLYTPLQAAKLAKETSSTKQDATVEVAIRLGVDPRKADQMVRGTVNLPHGTGKTARVAVFAVGEKADAAVAAGADVVGSDDLIERIQGGWLEFDAAIAAPDQMAKVGRIARVLGPRGLMPNPKTGTVTADVAKAVADIKGGKINFRVDKQANLHFVIGKASFDEKLLAENYGAAIDEVLRLKPSSSKGRYLKKITVSTTTGPGIPVDPSITRNFAGE</sequence>
<accession>P59790</accession>
<accession>A0A1R3XVZ7</accession>
<accession>X2BFN1</accession>
<proteinExistence type="inferred from homology"/>